<keyword id="KW-0963">Cytoplasm</keyword>
<keyword id="KW-0328">Glycosyltransferase</keyword>
<keyword id="KW-0660">Purine salvage</keyword>
<keyword id="KW-0808">Transferase</keyword>
<protein>
    <recommendedName>
        <fullName evidence="1">Adenine phosphoribosyltransferase</fullName>
        <shortName evidence="1">APRT</shortName>
        <ecNumber evidence="1">2.4.2.7</ecNumber>
    </recommendedName>
</protein>
<dbReference type="EC" id="2.4.2.7" evidence="1"/>
<dbReference type="EMBL" id="AM849034">
    <property type="protein sequence ID" value="CAQ01293.1"/>
    <property type="molecule type" value="Genomic_DNA"/>
</dbReference>
<dbReference type="RefSeq" id="WP_012298573.1">
    <property type="nucleotide sequence ID" value="NZ_MZMN01000003.1"/>
</dbReference>
<dbReference type="SMR" id="B0RGV9"/>
<dbReference type="STRING" id="31964.CMS1178"/>
<dbReference type="KEGG" id="cms:CMS1178"/>
<dbReference type="eggNOG" id="COG0503">
    <property type="taxonomic scope" value="Bacteria"/>
</dbReference>
<dbReference type="HOGENOM" id="CLU_063339_3_3_11"/>
<dbReference type="OrthoDB" id="9803963at2"/>
<dbReference type="UniPathway" id="UPA00588">
    <property type="reaction ID" value="UER00646"/>
</dbReference>
<dbReference type="Proteomes" id="UP000001318">
    <property type="component" value="Chromosome"/>
</dbReference>
<dbReference type="GO" id="GO:0005737">
    <property type="term" value="C:cytoplasm"/>
    <property type="evidence" value="ECO:0007669"/>
    <property type="project" value="UniProtKB-SubCell"/>
</dbReference>
<dbReference type="GO" id="GO:0002055">
    <property type="term" value="F:adenine binding"/>
    <property type="evidence" value="ECO:0007669"/>
    <property type="project" value="TreeGrafter"/>
</dbReference>
<dbReference type="GO" id="GO:0003999">
    <property type="term" value="F:adenine phosphoribosyltransferase activity"/>
    <property type="evidence" value="ECO:0007669"/>
    <property type="project" value="UniProtKB-UniRule"/>
</dbReference>
<dbReference type="GO" id="GO:0016208">
    <property type="term" value="F:AMP binding"/>
    <property type="evidence" value="ECO:0007669"/>
    <property type="project" value="TreeGrafter"/>
</dbReference>
<dbReference type="GO" id="GO:0006168">
    <property type="term" value="P:adenine salvage"/>
    <property type="evidence" value="ECO:0007669"/>
    <property type="project" value="InterPro"/>
</dbReference>
<dbReference type="GO" id="GO:0044209">
    <property type="term" value="P:AMP salvage"/>
    <property type="evidence" value="ECO:0007669"/>
    <property type="project" value="UniProtKB-UniRule"/>
</dbReference>
<dbReference type="GO" id="GO:0006166">
    <property type="term" value="P:purine ribonucleoside salvage"/>
    <property type="evidence" value="ECO:0007669"/>
    <property type="project" value="UniProtKB-KW"/>
</dbReference>
<dbReference type="CDD" id="cd06223">
    <property type="entry name" value="PRTases_typeI"/>
    <property type="match status" value="1"/>
</dbReference>
<dbReference type="FunFam" id="3.40.50.2020:FF:000021">
    <property type="entry name" value="Adenine phosphoribosyltransferase"/>
    <property type="match status" value="1"/>
</dbReference>
<dbReference type="Gene3D" id="3.40.50.2020">
    <property type="match status" value="1"/>
</dbReference>
<dbReference type="HAMAP" id="MF_00004">
    <property type="entry name" value="Aden_phosphoribosyltr"/>
    <property type="match status" value="1"/>
</dbReference>
<dbReference type="InterPro" id="IPR005764">
    <property type="entry name" value="Ade_phspho_trans"/>
</dbReference>
<dbReference type="InterPro" id="IPR000836">
    <property type="entry name" value="PRibTrfase_dom"/>
</dbReference>
<dbReference type="InterPro" id="IPR029057">
    <property type="entry name" value="PRTase-like"/>
</dbReference>
<dbReference type="InterPro" id="IPR050054">
    <property type="entry name" value="UPRTase/APRTase"/>
</dbReference>
<dbReference type="NCBIfam" id="NF002634">
    <property type="entry name" value="PRK02304.1-3"/>
    <property type="match status" value="1"/>
</dbReference>
<dbReference type="NCBIfam" id="NF002636">
    <property type="entry name" value="PRK02304.1-5"/>
    <property type="match status" value="1"/>
</dbReference>
<dbReference type="PANTHER" id="PTHR32315">
    <property type="entry name" value="ADENINE PHOSPHORIBOSYLTRANSFERASE"/>
    <property type="match status" value="1"/>
</dbReference>
<dbReference type="PANTHER" id="PTHR32315:SF3">
    <property type="entry name" value="ADENINE PHOSPHORIBOSYLTRANSFERASE"/>
    <property type="match status" value="1"/>
</dbReference>
<dbReference type="Pfam" id="PF00156">
    <property type="entry name" value="Pribosyltran"/>
    <property type="match status" value="1"/>
</dbReference>
<dbReference type="SUPFAM" id="SSF53271">
    <property type="entry name" value="PRTase-like"/>
    <property type="match status" value="1"/>
</dbReference>
<dbReference type="PROSITE" id="PS00103">
    <property type="entry name" value="PUR_PYR_PR_TRANSFER"/>
    <property type="match status" value="1"/>
</dbReference>
<evidence type="ECO:0000255" key="1">
    <source>
        <dbReference type="HAMAP-Rule" id="MF_00004"/>
    </source>
</evidence>
<reference key="1">
    <citation type="journal article" date="2008" name="J. Bacteriol.">
        <title>Genome of the actinomycete plant pathogen Clavibacter michiganensis subsp. sepedonicus suggests recent niche adaptation.</title>
        <authorList>
            <person name="Bentley S.D."/>
            <person name="Corton C."/>
            <person name="Brown S.E."/>
            <person name="Barron A."/>
            <person name="Clark L."/>
            <person name="Doggett J."/>
            <person name="Harris B."/>
            <person name="Ormond D."/>
            <person name="Quail M.A."/>
            <person name="May G."/>
            <person name="Francis D."/>
            <person name="Knudson D."/>
            <person name="Parkhill J."/>
            <person name="Ishimaru C.A."/>
        </authorList>
    </citation>
    <scope>NUCLEOTIDE SEQUENCE [LARGE SCALE GENOMIC DNA]</scope>
    <source>
        <strain>ATCC 33113 / DSM 20744 / JCM 9667 / LMG 2889 / ICMP 2535 / C-1</strain>
    </source>
</reference>
<sequence>MRLTDRRRPATDYRCRVPETSASDLVRSLLLTVPDFPQPGILFRDLTPVLADGAGLRAVVDNLVAAGGPVDAVAGVEARGFLLAAAAAYASGVGTLAVRKAGKLPGEVLRETYALEYGEAAIELHPGQLAPGSRVLLLDDVLATGGTLEAAARLLERAGYEVAGIGVVLELADLGGRARLAGHDVHAILSL</sequence>
<organism>
    <name type="scientific">Clavibacter sepedonicus</name>
    <name type="common">Clavibacter michiganensis subsp. sepedonicus</name>
    <dbReference type="NCBI Taxonomy" id="31964"/>
    <lineage>
        <taxon>Bacteria</taxon>
        <taxon>Bacillati</taxon>
        <taxon>Actinomycetota</taxon>
        <taxon>Actinomycetes</taxon>
        <taxon>Micrococcales</taxon>
        <taxon>Microbacteriaceae</taxon>
        <taxon>Clavibacter</taxon>
    </lineage>
</organism>
<comment type="function">
    <text evidence="1">Catalyzes a salvage reaction resulting in the formation of AMP, that is energically less costly than de novo synthesis.</text>
</comment>
<comment type="catalytic activity">
    <reaction evidence="1">
        <text>AMP + diphosphate = 5-phospho-alpha-D-ribose 1-diphosphate + adenine</text>
        <dbReference type="Rhea" id="RHEA:16609"/>
        <dbReference type="ChEBI" id="CHEBI:16708"/>
        <dbReference type="ChEBI" id="CHEBI:33019"/>
        <dbReference type="ChEBI" id="CHEBI:58017"/>
        <dbReference type="ChEBI" id="CHEBI:456215"/>
        <dbReference type="EC" id="2.4.2.7"/>
    </reaction>
</comment>
<comment type="pathway">
    <text evidence="1">Purine metabolism; AMP biosynthesis via salvage pathway; AMP from adenine: step 1/1.</text>
</comment>
<comment type="subunit">
    <text evidence="1">Homodimer.</text>
</comment>
<comment type="subcellular location">
    <subcellularLocation>
        <location evidence="1">Cytoplasm</location>
    </subcellularLocation>
</comment>
<comment type="similarity">
    <text evidence="1">Belongs to the purine/pyrimidine phosphoribosyltransferase family.</text>
</comment>
<gene>
    <name evidence="1" type="primary">apt</name>
    <name type="ordered locus">CMS1178</name>
</gene>
<proteinExistence type="inferred from homology"/>
<name>APT_CLASE</name>
<accession>B0RGV9</accession>
<feature type="chain" id="PRO_0000334711" description="Adenine phosphoribosyltransferase">
    <location>
        <begin position="1"/>
        <end position="191"/>
    </location>
</feature>